<protein>
    <recommendedName>
        <fullName>Mediator of RNA polymerase II transcription subunit 21</fullName>
    </recommendedName>
    <alternativeName>
        <fullName>Mediator complex subunit 21</fullName>
    </alternativeName>
    <alternativeName>
        <fullName>RNAPII complex component SRB7</fullName>
    </alternativeName>
</protein>
<evidence type="ECO:0000255" key="1"/>
<evidence type="ECO:0000256" key="2">
    <source>
        <dbReference type="SAM" id="MobiDB-lite"/>
    </source>
</evidence>
<evidence type="ECO:0000269" key="3">
    <source>
    </source>
</evidence>
<evidence type="ECO:0000269" key="4">
    <source>
    </source>
</evidence>
<evidence type="ECO:0000269" key="5">
    <source>
    </source>
</evidence>
<evidence type="ECO:0000305" key="6"/>
<keyword id="KW-0010">Activator</keyword>
<keyword id="KW-0175">Coiled coil</keyword>
<keyword id="KW-0539">Nucleus</keyword>
<keyword id="KW-1185">Reference proteome</keyword>
<keyword id="KW-0804">Transcription</keyword>
<keyword id="KW-0805">Transcription regulation</keyword>
<sequence length="139" mass="15041">MDIISQLQEQVNTIAAITFNAFGTLQRDAPPVQLSPNYPEPPATTTVTDDATPFPEQPKQLSAGLVKAAKQFDALVAALPLSEGGEGAQLKRIAELQVENDLVGQELQKQLEAAEKELKQVQELFGQAADNCLNMKKPE</sequence>
<name>MED21_ARATH</name>
<accession>C0LU16</accession>
<accession>Q84WP9</accession>
<accession>Q9M0Z8</accession>
<accession>Q9ZS95</accession>
<reference key="1">
    <citation type="journal article" date="2009" name="Plant Cell">
        <title>HISTONE MONOUBIQUITINATION1 interacts with a subunit of the mediator complex and regulates defense against necrotrophic fungal pathogens in Arabidopsis.</title>
        <authorList>
            <person name="Dhawan R."/>
            <person name="Luo H."/>
            <person name="Foerster A.M."/>
            <person name="Abuqamar S."/>
            <person name="Du H.N."/>
            <person name="Briggs S.D."/>
            <person name="Mittelsten Scheid O."/>
            <person name="Mengiste T."/>
        </authorList>
    </citation>
    <scope>NUCLEOTIDE SEQUENCE [MRNA]</scope>
    <scope>INTERACTION WITH HUB1</scope>
    <scope>DISRUPTION PHENOTYPE</scope>
</reference>
<reference key="2">
    <citation type="journal article" date="1999" name="Nature">
        <title>Sequence and analysis of chromosome 4 of the plant Arabidopsis thaliana.</title>
        <authorList>
            <person name="Mayer K.F.X."/>
            <person name="Schueller C."/>
            <person name="Wambutt R."/>
            <person name="Murphy G."/>
            <person name="Volckaert G."/>
            <person name="Pohl T."/>
            <person name="Duesterhoeft A."/>
            <person name="Stiekema W."/>
            <person name="Entian K.-D."/>
            <person name="Terryn N."/>
            <person name="Harris B."/>
            <person name="Ansorge W."/>
            <person name="Brandt P."/>
            <person name="Grivell L.A."/>
            <person name="Rieger M."/>
            <person name="Weichselgartner M."/>
            <person name="de Simone V."/>
            <person name="Obermaier B."/>
            <person name="Mache R."/>
            <person name="Mueller M."/>
            <person name="Kreis M."/>
            <person name="Delseny M."/>
            <person name="Puigdomenech P."/>
            <person name="Watson M."/>
            <person name="Schmidtheini T."/>
            <person name="Reichert B."/>
            <person name="Portetelle D."/>
            <person name="Perez-Alonso M."/>
            <person name="Boutry M."/>
            <person name="Bancroft I."/>
            <person name="Vos P."/>
            <person name="Hoheisel J."/>
            <person name="Zimmermann W."/>
            <person name="Wedler H."/>
            <person name="Ridley P."/>
            <person name="Langham S.-A."/>
            <person name="McCullagh B."/>
            <person name="Bilham L."/>
            <person name="Robben J."/>
            <person name="van der Schueren J."/>
            <person name="Grymonprez B."/>
            <person name="Chuang Y.-J."/>
            <person name="Vandenbussche F."/>
            <person name="Braeken M."/>
            <person name="Weltjens I."/>
            <person name="Voet M."/>
            <person name="Bastiaens I."/>
            <person name="Aert R."/>
            <person name="Defoor E."/>
            <person name="Weitzenegger T."/>
            <person name="Bothe G."/>
            <person name="Ramsperger U."/>
            <person name="Hilbert H."/>
            <person name="Braun M."/>
            <person name="Holzer E."/>
            <person name="Brandt A."/>
            <person name="Peters S."/>
            <person name="van Staveren M."/>
            <person name="Dirkse W."/>
            <person name="Mooijman P."/>
            <person name="Klein Lankhorst R."/>
            <person name="Rose M."/>
            <person name="Hauf J."/>
            <person name="Koetter P."/>
            <person name="Berneiser S."/>
            <person name="Hempel S."/>
            <person name="Feldpausch M."/>
            <person name="Lamberth S."/>
            <person name="Van den Daele H."/>
            <person name="De Keyser A."/>
            <person name="Buysshaert C."/>
            <person name="Gielen J."/>
            <person name="Villarroel R."/>
            <person name="De Clercq R."/>
            <person name="van Montagu M."/>
            <person name="Rogers J."/>
            <person name="Cronin A."/>
            <person name="Quail M.A."/>
            <person name="Bray-Allen S."/>
            <person name="Clark L."/>
            <person name="Doggett J."/>
            <person name="Hall S."/>
            <person name="Kay M."/>
            <person name="Lennard N."/>
            <person name="McLay K."/>
            <person name="Mayes R."/>
            <person name="Pettett A."/>
            <person name="Rajandream M.A."/>
            <person name="Lyne M."/>
            <person name="Benes V."/>
            <person name="Rechmann S."/>
            <person name="Borkova D."/>
            <person name="Bloecker H."/>
            <person name="Scharfe M."/>
            <person name="Grimm M."/>
            <person name="Loehnert T.-H."/>
            <person name="Dose S."/>
            <person name="de Haan M."/>
            <person name="Maarse A.C."/>
            <person name="Schaefer M."/>
            <person name="Mueller-Auer S."/>
            <person name="Gabel C."/>
            <person name="Fuchs M."/>
            <person name="Fartmann B."/>
            <person name="Granderath K."/>
            <person name="Dauner D."/>
            <person name="Herzl A."/>
            <person name="Neumann S."/>
            <person name="Argiriou A."/>
            <person name="Vitale D."/>
            <person name="Liguori R."/>
            <person name="Piravandi E."/>
            <person name="Massenet O."/>
            <person name="Quigley F."/>
            <person name="Clabauld G."/>
            <person name="Muendlein A."/>
            <person name="Felber R."/>
            <person name="Schnabl S."/>
            <person name="Hiller R."/>
            <person name="Schmidt W."/>
            <person name="Lecharny A."/>
            <person name="Aubourg S."/>
            <person name="Chefdor F."/>
            <person name="Cooke R."/>
            <person name="Berger C."/>
            <person name="Monfort A."/>
            <person name="Casacuberta E."/>
            <person name="Gibbons T."/>
            <person name="Weber N."/>
            <person name="Vandenbol M."/>
            <person name="Bargues M."/>
            <person name="Terol J."/>
            <person name="Torres A."/>
            <person name="Perez-Perez A."/>
            <person name="Purnelle B."/>
            <person name="Bent E."/>
            <person name="Johnson S."/>
            <person name="Tacon D."/>
            <person name="Jesse T."/>
            <person name="Heijnen L."/>
            <person name="Schwarz S."/>
            <person name="Scholler P."/>
            <person name="Heber S."/>
            <person name="Francs P."/>
            <person name="Bielke C."/>
            <person name="Frishman D."/>
            <person name="Haase D."/>
            <person name="Lemcke K."/>
            <person name="Mewes H.-W."/>
            <person name="Stocker S."/>
            <person name="Zaccaria P."/>
            <person name="Bevan M."/>
            <person name="Wilson R.K."/>
            <person name="de la Bastide M."/>
            <person name="Habermann K."/>
            <person name="Parnell L."/>
            <person name="Dedhia N."/>
            <person name="Gnoj L."/>
            <person name="Schutz K."/>
            <person name="Huang E."/>
            <person name="Spiegel L."/>
            <person name="Sekhon M."/>
            <person name="Murray J."/>
            <person name="Sheet P."/>
            <person name="Cordes M."/>
            <person name="Abu-Threideh J."/>
            <person name="Stoneking T."/>
            <person name="Kalicki J."/>
            <person name="Graves T."/>
            <person name="Harmon G."/>
            <person name="Edwards J."/>
            <person name="Latreille P."/>
            <person name="Courtney L."/>
            <person name="Cloud J."/>
            <person name="Abbott A."/>
            <person name="Scott K."/>
            <person name="Johnson D."/>
            <person name="Minx P."/>
            <person name="Bentley D."/>
            <person name="Fulton B."/>
            <person name="Miller N."/>
            <person name="Greco T."/>
            <person name="Kemp K."/>
            <person name="Kramer J."/>
            <person name="Fulton L."/>
            <person name="Mardis E."/>
            <person name="Dante M."/>
            <person name="Pepin K."/>
            <person name="Hillier L.W."/>
            <person name="Nelson J."/>
            <person name="Spieth J."/>
            <person name="Ryan E."/>
            <person name="Andrews S."/>
            <person name="Geisel C."/>
            <person name="Layman D."/>
            <person name="Du H."/>
            <person name="Ali J."/>
            <person name="Berghoff A."/>
            <person name="Jones K."/>
            <person name="Drone K."/>
            <person name="Cotton M."/>
            <person name="Joshu C."/>
            <person name="Antonoiu B."/>
            <person name="Zidanic M."/>
            <person name="Strong C."/>
            <person name="Sun H."/>
            <person name="Lamar B."/>
            <person name="Yordan C."/>
            <person name="Ma P."/>
            <person name="Zhong J."/>
            <person name="Preston R."/>
            <person name="Vil D."/>
            <person name="Shekher M."/>
            <person name="Matero A."/>
            <person name="Shah R."/>
            <person name="Swaby I.K."/>
            <person name="O'Shaughnessy A."/>
            <person name="Rodriguez M."/>
            <person name="Hoffman J."/>
            <person name="Till S."/>
            <person name="Granat S."/>
            <person name="Shohdy N."/>
            <person name="Hasegawa A."/>
            <person name="Hameed A."/>
            <person name="Lodhi M."/>
            <person name="Johnson A."/>
            <person name="Chen E."/>
            <person name="Marra M.A."/>
            <person name="Martienssen R."/>
            <person name="McCombie W.R."/>
        </authorList>
    </citation>
    <scope>NUCLEOTIDE SEQUENCE [LARGE SCALE GENOMIC DNA]</scope>
    <source>
        <strain>cv. Columbia</strain>
    </source>
</reference>
<reference key="3">
    <citation type="journal article" date="2017" name="Plant J.">
        <title>Araport11: a complete reannotation of the Arabidopsis thaliana reference genome.</title>
        <authorList>
            <person name="Cheng C.Y."/>
            <person name="Krishnakumar V."/>
            <person name="Chan A.P."/>
            <person name="Thibaud-Nissen F."/>
            <person name="Schobel S."/>
            <person name="Town C.D."/>
        </authorList>
    </citation>
    <scope>GENOME REANNOTATION</scope>
    <source>
        <strain>cv. Columbia</strain>
    </source>
</reference>
<reference key="4">
    <citation type="journal article" date="2003" name="Science">
        <title>Empirical analysis of transcriptional activity in the Arabidopsis genome.</title>
        <authorList>
            <person name="Yamada K."/>
            <person name="Lim J."/>
            <person name="Dale J.M."/>
            <person name="Chen H."/>
            <person name="Shinn P."/>
            <person name="Palm C.J."/>
            <person name="Southwick A.M."/>
            <person name="Wu H.C."/>
            <person name="Kim C.J."/>
            <person name="Nguyen M."/>
            <person name="Pham P.K."/>
            <person name="Cheuk R.F."/>
            <person name="Karlin-Newmann G."/>
            <person name="Liu S.X."/>
            <person name="Lam B."/>
            <person name="Sakano H."/>
            <person name="Wu T."/>
            <person name="Yu G."/>
            <person name="Miranda M."/>
            <person name="Quach H.L."/>
            <person name="Tripp M."/>
            <person name="Chang C.H."/>
            <person name="Lee J.M."/>
            <person name="Toriumi M.J."/>
            <person name="Chan M.M."/>
            <person name="Tang C.C."/>
            <person name="Onodera C.S."/>
            <person name="Deng J.M."/>
            <person name="Akiyama K."/>
            <person name="Ansari Y."/>
            <person name="Arakawa T."/>
            <person name="Banh J."/>
            <person name="Banno F."/>
            <person name="Bowser L."/>
            <person name="Brooks S.Y."/>
            <person name="Carninci P."/>
            <person name="Chao Q."/>
            <person name="Choy N."/>
            <person name="Enju A."/>
            <person name="Goldsmith A.D."/>
            <person name="Gurjal M."/>
            <person name="Hansen N.F."/>
            <person name="Hayashizaki Y."/>
            <person name="Johnson-Hopson C."/>
            <person name="Hsuan V.W."/>
            <person name="Iida K."/>
            <person name="Karnes M."/>
            <person name="Khan S."/>
            <person name="Koesema E."/>
            <person name="Ishida J."/>
            <person name="Jiang P.X."/>
            <person name="Jones T."/>
            <person name="Kawai J."/>
            <person name="Kamiya A."/>
            <person name="Meyers C."/>
            <person name="Nakajima M."/>
            <person name="Narusaka M."/>
            <person name="Seki M."/>
            <person name="Sakurai T."/>
            <person name="Satou M."/>
            <person name="Tamse R."/>
            <person name="Vaysberg M."/>
            <person name="Wallender E.K."/>
            <person name="Wong C."/>
            <person name="Yamamura Y."/>
            <person name="Yuan S."/>
            <person name="Shinozaki K."/>
            <person name="Davis R.W."/>
            <person name="Theologis A."/>
            <person name="Ecker J.R."/>
        </authorList>
    </citation>
    <scope>NUCLEOTIDE SEQUENCE [LARGE SCALE MRNA]</scope>
    <source>
        <strain>cv. Columbia</strain>
    </source>
</reference>
<reference key="5">
    <citation type="journal article" date="2007" name="Mol. Cell">
        <title>Purification of a plant mediator from Arabidopsis thaliana identifies PFT1 as the Med25 subunit.</title>
        <authorList>
            <person name="Baeckstroem S."/>
            <person name="Elfving N."/>
            <person name="Nilsson R."/>
            <person name="Wingsle G."/>
            <person name="Bjoerklund S."/>
        </authorList>
    </citation>
    <scope>IDENTIFICATION BY MASS SPECTROMETRY</scope>
    <scope>SUBUNIT</scope>
    <scope>NOMENCLATURE</scope>
</reference>
<reference key="6">
    <citation type="journal article" date="2011" name="Plant Physiol.">
        <title>The Mediator complex in plants: structure, phylogeny, and expression profiling of representative genes in a dicot (Arabidopsis) and a monocot (rice) during reproduction and abiotic stress.</title>
        <authorList>
            <person name="Mathur S."/>
            <person name="Vyas S."/>
            <person name="Kapoor S."/>
            <person name="Tyagi A.K."/>
        </authorList>
    </citation>
    <scope>IDENTIFICATION</scope>
    <scope>SUBUNIT</scope>
    <scope>NOMENCLATURE</scope>
</reference>
<gene>
    <name type="primary">MED21</name>
    <name type="synonym">MED21_1</name>
    <name type="synonym">SRB7</name>
    <name type="ordered locus">At4g04780</name>
    <name type="ORF">T4B21.7</name>
</gene>
<proteinExistence type="evidence at protein level"/>
<comment type="function">
    <text>Component of the Mediator complex, a coactivator involved in the regulated transcription of nearly all RNA polymerase II-dependent genes. Mediator functions as a bridge to convey information from gene-specific regulatory proteins to the basal RNA polymerase II transcription machinery. Mediator is recruited to promoters by direct interactions with regulatory proteins and serves as a scaffold for the assembly of a functional preinitiation complex with RNA polymerase II and the general transcription factors. Required for embryo development and defense against necrotrophic fungal pathogens.</text>
</comment>
<comment type="subunit">
    <text evidence="3 4 5">Component of the Mediator complex. Interacts with HUB1.</text>
</comment>
<comment type="interaction">
    <interactant intactId="EBI-21254755">
        <id>C0LU16</id>
    </interactant>
    <interactant intactId="EBI-2119299">
        <id>Q94AI7</id>
        <label>TPL</label>
    </interactant>
    <organismsDiffer>false</organismsDiffer>
    <experiments>6</experiments>
</comment>
<comment type="subcellular location">
    <subcellularLocation>
        <location evidence="6">Nucleus</location>
    </subcellularLocation>
</comment>
<comment type="disruption phenotype">
    <text evidence="4">Embryonic lethal.</text>
</comment>
<comment type="similarity">
    <text evidence="6">Belongs to the Mediator complex subunit 21 family.</text>
</comment>
<comment type="sequence caution" evidence="6">
    <conflict type="erroneous gene model prediction">
        <sequence resource="EMBL-CDS" id="AAD03443"/>
    </conflict>
</comment>
<comment type="sequence caution" evidence="6">
    <conflict type="erroneous initiation">
        <sequence resource="EMBL-CDS" id="AAO22731"/>
    </conflict>
    <text>Extended N-terminus.</text>
</comment>
<comment type="sequence caution" evidence="6">
    <conflict type="erroneous gene model prediction">
        <sequence resource="EMBL-CDS" id="CAB80843"/>
    </conflict>
    <text>The predicted gene At4g04780 has been split into 2 genes: At4g04775 and At4g04780.</text>
</comment>
<dbReference type="EMBL" id="FJ769239">
    <property type="protein sequence ID" value="ACN81041.1"/>
    <property type="molecule type" value="mRNA"/>
</dbReference>
<dbReference type="EMBL" id="AF118223">
    <property type="protein sequence ID" value="AAD03443.1"/>
    <property type="status" value="ALT_SEQ"/>
    <property type="molecule type" value="Genomic_DNA"/>
</dbReference>
<dbReference type="EMBL" id="AL161501">
    <property type="protein sequence ID" value="CAB80843.1"/>
    <property type="status" value="ALT_SEQ"/>
    <property type="molecule type" value="Genomic_DNA"/>
</dbReference>
<dbReference type="EMBL" id="CP002687">
    <property type="protein sequence ID" value="AEE82425.1"/>
    <property type="molecule type" value="Genomic_DNA"/>
</dbReference>
<dbReference type="EMBL" id="BT002915">
    <property type="protein sequence ID" value="AAO22731.1"/>
    <property type="status" value="ALT_INIT"/>
    <property type="molecule type" value="mRNA"/>
</dbReference>
<dbReference type="PIR" id="B85060">
    <property type="entry name" value="B85060"/>
</dbReference>
<dbReference type="RefSeq" id="NP_192387.2">
    <property type="nucleotide sequence ID" value="NM_116716.5"/>
</dbReference>
<dbReference type="SMR" id="C0LU16"/>
<dbReference type="BioGRID" id="11126">
    <property type="interactions" value="1"/>
</dbReference>
<dbReference type="FunCoup" id="C0LU16">
    <property type="interactions" value="2557"/>
</dbReference>
<dbReference type="IntAct" id="C0LU16">
    <property type="interactions" value="4"/>
</dbReference>
<dbReference type="STRING" id="3702.C0LU16"/>
<dbReference type="PaxDb" id="3702-AT4G04780.1"/>
<dbReference type="ProteomicsDB" id="238252"/>
<dbReference type="EnsemblPlants" id="AT4G04780.1">
    <property type="protein sequence ID" value="AT4G04780.1"/>
    <property type="gene ID" value="AT4G04780"/>
</dbReference>
<dbReference type="GeneID" id="825815"/>
<dbReference type="Gramene" id="AT4G04780.1">
    <property type="protein sequence ID" value="AT4G04780.1"/>
    <property type="gene ID" value="AT4G04780"/>
</dbReference>
<dbReference type="KEGG" id="ath:AT4G04780"/>
<dbReference type="Araport" id="AT4G04780"/>
<dbReference type="TAIR" id="AT4G04780">
    <property type="gene designation" value="MED21"/>
</dbReference>
<dbReference type="eggNOG" id="KOG1510">
    <property type="taxonomic scope" value="Eukaryota"/>
</dbReference>
<dbReference type="HOGENOM" id="CLU_113074_0_0_1"/>
<dbReference type="InParanoid" id="C0LU16"/>
<dbReference type="OMA" id="TDNCINF"/>
<dbReference type="PRO" id="PR:C0LU16"/>
<dbReference type="Proteomes" id="UP000006548">
    <property type="component" value="Chromosome 4"/>
</dbReference>
<dbReference type="ExpressionAtlas" id="C0LU16">
    <property type="expression patterns" value="baseline and differential"/>
</dbReference>
<dbReference type="GO" id="GO:0016592">
    <property type="term" value="C:mediator complex"/>
    <property type="evidence" value="ECO:0000314"/>
    <property type="project" value="UniProtKB"/>
</dbReference>
<dbReference type="GO" id="GO:0043078">
    <property type="term" value="C:polar nucleus"/>
    <property type="evidence" value="ECO:0000315"/>
    <property type="project" value="UniProtKB"/>
</dbReference>
<dbReference type="GO" id="GO:0050832">
    <property type="term" value="P:defense response to fungus"/>
    <property type="evidence" value="ECO:0000315"/>
    <property type="project" value="UniProtKB"/>
</dbReference>
<dbReference type="GO" id="GO:0006355">
    <property type="term" value="P:regulation of DNA-templated transcription"/>
    <property type="evidence" value="ECO:0000304"/>
    <property type="project" value="TAIR"/>
</dbReference>
<dbReference type="Gene3D" id="6.10.280.10">
    <property type="entry name" value="Mediator complex, subunit Med21"/>
    <property type="match status" value="1"/>
</dbReference>
<dbReference type="InterPro" id="IPR037212">
    <property type="entry name" value="Med7/Med21-like"/>
</dbReference>
<dbReference type="InterPro" id="IPR021384">
    <property type="entry name" value="Mediator_Med21"/>
</dbReference>
<dbReference type="PANTHER" id="PTHR13381:SF0">
    <property type="entry name" value="MEDIATOR OF RNA POLYMERASE II TRANSCRIPTION SUBUNIT 21"/>
    <property type="match status" value="1"/>
</dbReference>
<dbReference type="PANTHER" id="PTHR13381">
    <property type="entry name" value="RNA POLYMERASE II HOLOENZYME COMPONENT SRB7"/>
    <property type="match status" value="1"/>
</dbReference>
<dbReference type="Pfam" id="PF11221">
    <property type="entry name" value="Med21"/>
    <property type="match status" value="1"/>
</dbReference>
<dbReference type="SUPFAM" id="SSF140718">
    <property type="entry name" value="Mediator hinge subcomplex-like"/>
    <property type="match status" value="1"/>
</dbReference>
<organism>
    <name type="scientific">Arabidopsis thaliana</name>
    <name type="common">Mouse-ear cress</name>
    <dbReference type="NCBI Taxonomy" id="3702"/>
    <lineage>
        <taxon>Eukaryota</taxon>
        <taxon>Viridiplantae</taxon>
        <taxon>Streptophyta</taxon>
        <taxon>Embryophyta</taxon>
        <taxon>Tracheophyta</taxon>
        <taxon>Spermatophyta</taxon>
        <taxon>Magnoliopsida</taxon>
        <taxon>eudicotyledons</taxon>
        <taxon>Gunneridae</taxon>
        <taxon>Pentapetalae</taxon>
        <taxon>rosids</taxon>
        <taxon>malvids</taxon>
        <taxon>Brassicales</taxon>
        <taxon>Brassicaceae</taxon>
        <taxon>Camelineae</taxon>
        <taxon>Arabidopsis</taxon>
    </lineage>
</organism>
<feature type="chain" id="PRO_0000397046" description="Mediator of RNA polymerase II transcription subunit 21">
    <location>
        <begin position="1"/>
        <end position="139"/>
    </location>
</feature>
<feature type="region of interest" description="Disordered" evidence="2">
    <location>
        <begin position="28"/>
        <end position="58"/>
    </location>
</feature>
<feature type="coiled-coil region" evidence="1">
    <location>
        <begin position="92"/>
        <end position="132"/>
    </location>
</feature>
<feature type="compositionally biased region" description="Low complexity" evidence="2">
    <location>
        <begin position="43"/>
        <end position="54"/>
    </location>
</feature>